<dbReference type="EMBL" id="AE000511">
    <property type="protein sequence ID" value="AAD07332.1"/>
    <property type="molecule type" value="Genomic_DNA"/>
</dbReference>
<dbReference type="PIR" id="B64553">
    <property type="entry name" value="B64553"/>
</dbReference>
<dbReference type="RefSeq" id="NP_207064.1">
    <property type="nucleotide sequence ID" value="NC_000915.1"/>
</dbReference>
<dbReference type="RefSeq" id="WP_000924910.1">
    <property type="nucleotide sequence ID" value="NC_018939.1"/>
</dbReference>
<dbReference type="SMR" id="O25045"/>
<dbReference type="FunCoup" id="O25045">
    <property type="interactions" value="332"/>
</dbReference>
<dbReference type="IntAct" id="O25045">
    <property type="interactions" value="1"/>
</dbReference>
<dbReference type="STRING" id="85962.HP_0266"/>
<dbReference type="PaxDb" id="85962-C694_01345"/>
<dbReference type="DNASU" id="899074"/>
<dbReference type="EnsemblBacteria" id="AAD07332">
    <property type="protein sequence ID" value="AAD07332"/>
    <property type="gene ID" value="HP_0266"/>
</dbReference>
<dbReference type="KEGG" id="heo:C694_01345"/>
<dbReference type="KEGG" id="hpy:HP_0266"/>
<dbReference type="PATRIC" id="fig|85962.47.peg.286"/>
<dbReference type="eggNOG" id="COG0044">
    <property type="taxonomic scope" value="Bacteria"/>
</dbReference>
<dbReference type="InParanoid" id="O25045"/>
<dbReference type="OrthoDB" id="9803027at2"/>
<dbReference type="PhylomeDB" id="O25045"/>
<dbReference type="Proteomes" id="UP000000429">
    <property type="component" value="Chromosome"/>
</dbReference>
<dbReference type="GO" id="GO:0005737">
    <property type="term" value="C:cytoplasm"/>
    <property type="evidence" value="ECO:0000318"/>
    <property type="project" value="GO_Central"/>
</dbReference>
<dbReference type="GO" id="GO:0004038">
    <property type="term" value="F:allantoinase activity"/>
    <property type="evidence" value="ECO:0000318"/>
    <property type="project" value="GO_Central"/>
</dbReference>
<dbReference type="GO" id="GO:0006145">
    <property type="term" value="P:purine nucleobase catabolic process"/>
    <property type="evidence" value="ECO:0000318"/>
    <property type="project" value="GO_Central"/>
</dbReference>
<dbReference type="GO" id="GO:0006221">
    <property type="term" value="P:pyrimidine nucleotide biosynthetic process"/>
    <property type="evidence" value="ECO:0007669"/>
    <property type="project" value="UniProtKB-KW"/>
</dbReference>
<dbReference type="Gene3D" id="3.20.20.140">
    <property type="entry name" value="Metal-dependent hydrolases"/>
    <property type="match status" value="1"/>
</dbReference>
<dbReference type="InterPro" id="IPR006680">
    <property type="entry name" value="Amidohydro-rel"/>
</dbReference>
<dbReference type="InterPro" id="IPR050138">
    <property type="entry name" value="DHOase/Allantoinase_Hydrolase"/>
</dbReference>
<dbReference type="InterPro" id="IPR011059">
    <property type="entry name" value="Metal-dep_hydrolase_composite"/>
</dbReference>
<dbReference type="InterPro" id="IPR032466">
    <property type="entry name" value="Metal_Hydrolase"/>
</dbReference>
<dbReference type="PANTHER" id="PTHR43668">
    <property type="entry name" value="ALLANTOINASE"/>
    <property type="match status" value="1"/>
</dbReference>
<dbReference type="PANTHER" id="PTHR43668:SF2">
    <property type="entry name" value="ALLANTOINASE"/>
    <property type="match status" value="1"/>
</dbReference>
<dbReference type="Pfam" id="PF01979">
    <property type="entry name" value="Amidohydro_1"/>
    <property type="match status" value="1"/>
</dbReference>
<dbReference type="SUPFAM" id="SSF51338">
    <property type="entry name" value="Composite domain of metallo-dependent hydrolases"/>
    <property type="match status" value="1"/>
</dbReference>
<dbReference type="SUPFAM" id="SSF51556">
    <property type="entry name" value="Metallo-dependent hydrolases"/>
    <property type="match status" value="1"/>
</dbReference>
<name>PYRX_HELPY</name>
<sequence length="378" mass="42362">MLLKNASFYDDEVLKRADIRLKDSLITEIKENLSPINNEEVIECRDLFVLPSFIDLSVTGLEGYENLKQKAFKGGVGLLNVFNCDQSGIKNIMAIKNNQLADIATLKNKGGEILIAPSDAFLELISHYAKSYNLPLLISLENSFEALNSGELAYELGQNFVENAFENTRLVRFMEVSRALQIPVLLDKVNSITTLKLIKAFNDLGAKLQAQTPLSHLVLDESVYEDYEPRFKIAPPLRDKESQNALKEALKNNEIAMLTSLHASKNSNAQLFEESAFGCESIEDAFSVAYTFLVQKKVISFQQLIKVMAINQAKFLKLNAGEVKENQLANLMIVDLNAQTRVSNQNSPFYGLELYGEVQRMILKGQTTFIKENACKKS</sequence>
<reference key="1">
    <citation type="journal article" date="1997" name="Nature">
        <title>The complete genome sequence of the gastric pathogen Helicobacter pylori.</title>
        <authorList>
            <person name="Tomb J.-F."/>
            <person name="White O."/>
            <person name="Kerlavage A.R."/>
            <person name="Clayton R.A."/>
            <person name="Sutton G.G."/>
            <person name="Fleischmann R.D."/>
            <person name="Ketchum K.A."/>
            <person name="Klenk H.-P."/>
            <person name="Gill S.R."/>
            <person name="Dougherty B.A."/>
            <person name="Nelson K.E."/>
            <person name="Quackenbush J."/>
            <person name="Zhou L."/>
            <person name="Kirkness E.F."/>
            <person name="Peterson S.N."/>
            <person name="Loftus B.J."/>
            <person name="Richardson D.L."/>
            <person name="Dodson R.J."/>
            <person name="Khalak H.G."/>
            <person name="Glodek A."/>
            <person name="McKenney K."/>
            <person name="FitzGerald L.M."/>
            <person name="Lee N."/>
            <person name="Adams M.D."/>
            <person name="Hickey E.K."/>
            <person name="Berg D.E."/>
            <person name="Gocayne J.D."/>
            <person name="Utterback T.R."/>
            <person name="Peterson J.D."/>
            <person name="Kelley J.M."/>
            <person name="Cotton M.D."/>
            <person name="Weidman J.F."/>
            <person name="Fujii C."/>
            <person name="Bowman C."/>
            <person name="Watthey L."/>
            <person name="Wallin E."/>
            <person name="Hayes W.S."/>
            <person name="Borodovsky M."/>
            <person name="Karp P.D."/>
            <person name="Smith H.O."/>
            <person name="Fraser C.M."/>
            <person name="Venter J.C."/>
        </authorList>
    </citation>
    <scope>NUCLEOTIDE SEQUENCE [LARGE SCALE GENOMIC DNA]</scope>
    <source>
        <strain>ATCC 700392 / 26695</strain>
    </source>
</reference>
<organism>
    <name type="scientific">Helicobacter pylori (strain ATCC 700392 / 26695)</name>
    <name type="common">Campylobacter pylori</name>
    <dbReference type="NCBI Taxonomy" id="85962"/>
    <lineage>
        <taxon>Bacteria</taxon>
        <taxon>Pseudomonadati</taxon>
        <taxon>Campylobacterota</taxon>
        <taxon>Epsilonproteobacteria</taxon>
        <taxon>Campylobacterales</taxon>
        <taxon>Helicobacteraceae</taxon>
        <taxon>Helicobacter</taxon>
    </lineage>
</organism>
<feature type="chain" id="PRO_0000147287" description="Probable dihydroorotase-like protein">
    <location>
        <begin position="1"/>
        <end position="378"/>
    </location>
</feature>
<accession>O25045</accession>
<comment type="function">
    <text evidence="1">Non-functional DHOase.</text>
</comment>
<comment type="similarity">
    <text evidence="2">Belongs to the metallo-dependent hydrolases superfamily. DHOase family. PyrC' subfamily.</text>
</comment>
<gene>
    <name type="primary">pyrC'</name>
    <name type="ordered locus">HP_0266</name>
</gene>
<proteinExistence type="inferred from homology"/>
<protein>
    <recommendedName>
        <fullName>Probable dihydroorotase-like protein</fullName>
    </recommendedName>
    <alternativeName>
        <fullName>Aspartate carbamoyltransferase 42 kDa non-catalytic chain</fullName>
    </alternativeName>
</protein>
<keyword id="KW-0665">Pyrimidine biosynthesis</keyword>
<keyword id="KW-1185">Reference proteome</keyword>
<evidence type="ECO:0000250" key="1">
    <source>
        <dbReference type="UniProtKB" id="Q59712"/>
    </source>
</evidence>
<evidence type="ECO:0000305" key="2"/>